<name>YDHL_ECOLI</name>
<organism>
    <name type="scientific">Escherichia coli (strain K12)</name>
    <dbReference type="NCBI Taxonomy" id="83333"/>
    <lineage>
        <taxon>Bacteria</taxon>
        <taxon>Pseudomonadati</taxon>
        <taxon>Pseudomonadota</taxon>
        <taxon>Gammaproteobacteria</taxon>
        <taxon>Enterobacterales</taxon>
        <taxon>Enterobacteriaceae</taxon>
        <taxon>Escherichia</taxon>
    </lineage>
</organism>
<dbReference type="EMBL" id="U00096">
    <property type="protein sequence ID" value="AAC74720.2"/>
    <property type="molecule type" value="Genomic_DNA"/>
</dbReference>
<dbReference type="EMBL" id="AP009048">
    <property type="protein sequence ID" value="BAE76491.1"/>
    <property type="molecule type" value="Genomic_DNA"/>
</dbReference>
<dbReference type="PIR" id="B64922">
    <property type="entry name" value="B64922"/>
</dbReference>
<dbReference type="RefSeq" id="NP_416165.2">
    <property type="nucleotide sequence ID" value="NC_000913.3"/>
</dbReference>
<dbReference type="RefSeq" id="WP_000840481.1">
    <property type="nucleotide sequence ID" value="NZ_STEB01000003.1"/>
</dbReference>
<dbReference type="SMR" id="P64474"/>
<dbReference type="BioGRID" id="4260261">
    <property type="interactions" value="8"/>
</dbReference>
<dbReference type="FunCoup" id="P64474">
    <property type="interactions" value="3"/>
</dbReference>
<dbReference type="STRING" id="511145.b1648"/>
<dbReference type="jPOST" id="P64474"/>
<dbReference type="PaxDb" id="511145-b1648"/>
<dbReference type="EnsemblBacteria" id="AAC74720">
    <property type="protein sequence ID" value="AAC74720"/>
    <property type="gene ID" value="b1648"/>
</dbReference>
<dbReference type="GeneID" id="946168"/>
<dbReference type="KEGG" id="ecj:JW5827"/>
<dbReference type="KEGG" id="eco:b1648"/>
<dbReference type="KEGG" id="ecoc:C3026_09460"/>
<dbReference type="PATRIC" id="fig|83333.103.peg.2490"/>
<dbReference type="EchoBASE" id="EB3704"/>
<dbReference type="eggNOG" id="COG3313">
    <property type="taxonomic scope" value="Bacteria"/>
</dbReference>
<dbReference type="HOGENOM" id="CLU_162538_0_1_6"/>
<dbReference type="InParanoid" id="P64474"/>
<dbReference type="OMA" id="GICQADE"/>
<dbReference type="OrthoDB" id="8911262at2"/>
<dbReference type="PhylomeDB" id="P64474"/>
<dbReference type="BioCyc" id="EcoCyc:G6888-MONOMER"/>
<dbReference type="PRO" id="PR:P64474"/>
<dbReference type="Proteomes" id="UP000000625">
    <property type="component" value="Chromosome"/>
</dbReference>
<dbReference type="GO" id="GO:0042542">
    <property type="term" value="P:response to hydrogen peroxide"/>
    <property type="evidence" value="ECO:0000315"/>
    <property type="project" value="EcoCyc"/>
</dbReference>
<dbReference type="InterPro" id="IPR010710">
    <property type="entry name" value="DUF1289"/>
</dbReference>
<dbReference type="PANTHER" id="PTHR35175">
    <property type="entry name" value="DUF1289 DOMAIN-CONTAINING PROTEIN"/>
    <property type="match status" value="1"/>
</dbReference>
<dbReference type="PANTHER" id="PTHR35175:SF1">
    <property type="entry name" value="OXIDOREDUCTASE"/>
    <property type="match status" value="1"/>
</dbReference>
<dbReference type="Pfam" id="PF06945">
    <property type="entry name" value="DUF1289"/>
    <property type="match status" value="1"/>
</dbReference>
<gene>
    <name type="primary">ydhL</name>
    <name type="ordered locus">b1648</name>
    <name type="ordered locus">JW5827</name>
</gene>
<accession>P64474</accession>
<accession>P76188</accession>
<accession>Q2MB65</accession>
<feature type="chain" id="PRO_0000013851" description="Uncharacterized protein YdhL">
    <location>
        <begin position="1"/>
        <end position="79"/>
    </location>
</feature>
<sequence>MAEQLEFFPVQSPCRGICQSDERGFCRGCFRSRDERFNWNKMSDGEKQEVLRLCRQRLMRKLRANKPASSDEPEQPSLF</sequence>
<protein>
    <recommendedName>
        <fullName>Uncharacterized protein YdhL</fullName>
    </recommendedName>
</protein>
<keyword id="KW-1185">Reference proteome</keyword>
<proteinExistence type="predicted"/>
<reference key="1">
    <citation type="journal article" date="1997" name="Science">
        <title>The complete genome sequence of Escherichia coli K-12.</title>
        <authorList>
            <person name="Blattner F.R."/>
            <person name="Plunkett G. III"/>
            <person name="Bloch C.A."/>
            <person name="Perna N.T."/>
            <person name="Burland V."/>
            <person name="Riley M."/>
            <person name="Collado-Vides J."/>
            <person name="Glasner J.D."/>
            <person name="Rode C.K."/>
            <person name="Mayhew G.F."/>
            <person name="Gregor J."/>
            <person name="Davis N.W."/>
            <person name="Kirkpatrick H.A."/>
            <person name="Goeden M.A."/>
            <person name="Rose D.J."/>
            <person name="Mau B."/>
            <person name="Shao Y."/>
        </authorList>
    </citation>
    <scope>NUCLEOTIDE SEQUENCE [LARGE SCALE GENOMIC DNA]</scope>
    <source>
        <strain>K12 / MG1655 / ATCC 47076</strain>
    </source>
</reference>
<reference key="2">
    <citation type="journal article" date="2006" name="Mol. Syst. Biol.">
        <title>Highly accurate genome sequences of Escherichia coli K-12 strains MG1655 and W3110.</title>
        <authorList>
            <person name="Hayashi K."/>
            <person name="Morooka N."/>
            <person name="Yamamoto Y."/>
            <person name="Fujita K."/>
            <person name="Isono K."/>
            <person name="Choi S."/>
            <person name="Ohtsubo E."/>
            <person name="Baba T."/>
            <person name="Wanner B.L."/>
            <person name="Mori H."/>
            <person name="Horiuchi T."/>
        </authorList>
    </citation>
    <scope>NUCLEOTIDE SEQUENCE [LARGE SCALE GENOMIC DNA]</scope>
    <source>
        <strain>K12 / W3110 / ATCC 27325 / DSM 5911</strain>
    </source>
</reference>